<organism>
    <name type="scientific">Haemophilus influenzae (strain ATCC 51907 / DSM 11121 / KW20 / Rd)</name>
    <dbReference type="NCBI Taxonomy" id="71421"/>
    <lineage>
        <taxon>Bacteria</taxon>
        <taxon>Pseudomonadati</taxon>
        <taxon>Pseudomonadota</taxon>
        <taxon>Gammaproteobacteria</taxon>
        <taxon>Pasteurellales</taxon>
        <taxon>Pasteurellaceae</taxon>
        <taxon>Haemophilus</taxon>
    </lineage>
</organism>
<dbReference type="EC" id="3.4.-.-"/>
<dbReference type="EMBL" id="L42023">
    <property type="protein sequence ID" value="AAC22960.1"/>
    <property type="molecule type" value="Genomic_DNA"/>
</dbReference>
<dbReference type="PIR" id="H64170">
    <property type="entry name" value="H64170"/>
</dbReference>
<dbReference type="RefSeq" id="NP_439465.1">
    <property type="nucleotide sequence ID" value="NC_000907.1"/>
</dbReference>
<dbReference type="SMR" id="Q57223"/>
<dbReference type="STRING" id="71421.HI_1314"/>
<dbReference type="MEROPS" id="C40.004"/>
<dbReference type="EnsemblBacteria" id="AAC22960">
    <property type="protein sequence ID" value="AAC22960"/>
    <property type="gene ID" value="HI_1314"/>
</dbReference>
<dbReference type="KEGG" id="hin:HI_1314"/>
<dbReference type="PATRIC" id="fig|71421.8.peg.1366"/>
<dbReference type="eggNOG" id="COG0791">
    <property type="taxonomic scope" value="Bacteria"/>
</dbReference>
<dbReference type="HOGENOM" id="CLU_016043_9_3_6"/>
<dbReference type="OrthoDB" id="9807055at2"/>
<dbReference type="PhylomeDB" id="Q57223"/>
<dbReference type="BioCyc" id="HINF71421:G1GJ1-1339-MONOMER"/>
<dbReference type="Proteomes" id="UP000000579">
    <property type="component" value="Chromosome"/>
</dbReference>
<dbReference type="GO" id="GO:0005886">
    <property type="term" value="C:plasma membrane"/>
    <property type="evidence" value="ECO:0007669"/>
    <property type="project" value="UniProtKB-SubCell"/>
</dbReference>
<dbReference type="GO" id="GO:0008234">
    <property type="term" value="F:cysteine-type peptidase activity"/>
    <property type="evidence" value="ECO:0007669"/>
    <property type="project" value="UniProtKB-KW"/>
</dbReference>
<dbReference type="GO" id="GO:0004175">
    <property type="term" value="F:endopeptidase activity"/>
    <property type="evidence" value="ECO:0000318"/>
    <property type="project" value="GO_Central"/>
</dbReference>
<dbReference type="GO" id="GO:0009254">
    <property type="term" value="P:peptidoglycan turnover"/>
    <property type="evidence" value="ECO:0000318"/>
    <property type="project" value="GO_Central"/>
</dbReference>
<dbReference type="GO" id="GO:0006508">
    <property type="term" value="P:proteolysis"/>
    <property type="evidence" value="ECO:0007669"/>
    <property type="project" value="UniProtKB-KW"/>
</dbReference>
<dbReference type="Gene3D" id="3.90.1720.10">
    <property type="entry name" value="endopeptidase domain like (from Nostoc punctiforme)"/>
    <property type="match status" value="1"/>
</dbReference>
<dbReference type="InterPro" id="IPR052062">
    <property type="entry name" value="Murein_DD/LD_carboxypeptidase"/>
</dbReference>
<dbReference type="InterPro" id="IPR000064">
    <property type="entry name" value="NLP_P60_dom"/>
</dbReference>
<dbReference type="InterPro" id="IPR038765">
    <property type="entry name" value="Papain-like_cys_pep_sf"/>
</dbReference>
<dbReference type="PANTHER" id="PTHR47360:SF1">
    <property type="entry name" value="ENDOPEPTIDASE NLPC-RELATED"/>
    <property type="match status" value="1"/>
</dbReference>
<dbReference type="PANTHER" id="PTHR47360">
    <property type="entry name" value="MUREIN DD-ENDOPEPTIDASE MEPS/MUREIN LD-CARBOXYPEPTIDASE"/>
    <property type="match status" value="1"/>
</dbReference>
<dbReference type="Pfam" id="PF00877">
    <property type="entry name" value="NLPC_P60"/>
    <property type="match status" value="1"/>
</dbReference>
<dbReference type="SUPFAM" id="SSF54001">
    <property type="entry name" value="Cysteine proteinases"/>
    <property type="match status" value="1"/>
</dbReference>
<dbReference type="PROSITE" id="PS51935">
    <property type="entry name" value="NLPC_P60"/>
    <property type="match status" value="1"/>
</dbReference>
<dbReference type="PROSITE" id="PS51257">
    <property type="entry name" value="PROKAR_LIPOPROTEIN"/>
    <property type="match status" value="1"/>
</dbReference>
<name>Y1314_HAEIN</name>
<accession>Q57223</accession>
<accession>O05058</accession>
<sequence>MKVYKSFLIATASLFLFACSSFQNDDYAMNYKGQIGEPIMAIAMLSEQQHEWAGTPYVLGGVSRRGVDCSGFVQKTFFDRFNLRLPRSTVEQANYGKHVRKEDIQTGDLIFFKTGRGPNGYHVGIYVKEDKFLHASTRGGVVYSSMNNPYWSKAFWQVRRI</sequence>
<evidence type="ECO:0000255" key="1">
    <source>
        <dbReference type="PROSITE-ProRule" id="PRU00303"/>
    </source>
</evidence>
<evidence type="ECO:0000255" key="2">
    <source>
        <dbReference type="PROSITE-ProRule" id="PRU01284"/>
    </source>
</evidence>
<evidence type="ECO:0000305" key="3"/>
<comment type="subcellular location">
    <subcellularLocation>
        <location evidence="1">Cell membrane</location>
        <topology evidence="1">Lipid-anchor</topology>
    </subcellularLocation>
</comment>
<comment type="similarity">
    <text evidence="2 3">Belongs to the peptidase C40 family.</text>
</comment>
<gene>
    <name type="ordered locus">HI_1314</name>
</gene>
<protein>
    <recommendedName>
        <fullName>Probable endopeptidase HI_1314</fullName>
        <ecNumber>3.4.-.-</ecNumber>
    </recommendedName>
</protein>
<reference key="1">
    <citation type="journal article" date="1995" name="Science">
        <title>Whole-genome random sequencing and assembly of Haemophilus influenzae Rd.</title>
        <authorList>
            <person name="Fleischmann R.D."/>
            <person name="Adams M.D."/>
            <person name="White O."/>
            <person name="Clayton R.A."/>
            <person name="Kirkness E.F."/>
            <person name="Kerlavage A.R."/>
            <person name="Bult C.J."/>
            <person name="Tomb J.-F."/>
            <person name="Dougherty B.A."/>
            <person name="Merrick J.M."/>
            <person name="McKenney K."/>
            <person name="Sutton G.G."/>
            <person name="FitzHugh W."/>
            <person name="Fields C.A."/>
            <person name="Gocayne J.D."/>
            <person name="Scott J.D."/>
            <person name="Shirley R."/>
            <person name="Liu L.-I."/>
            <person name="Glodek A."/>
            <person name="Kelley J.M."/>
            <person name="Weidman J.F."/>
            <person name="Phillips C.A."/>
            <person name="Spriggs T."/>
            <person name="Hedblom E."/>
            <person name="Cotton M.D."/>
            <person name="Utterback T.R."/>
            <person name="Hanna M.C."/>
            <person name="Nguyen D.T."/>
            <person name="Saudek D.M."/>
            <person name="Brandon R.C."/>
            <person name="Fine L.D."/>
            <person name="Fritchman J.L."/>
            <person name="Fuhrmann J.L."/>
            <person name="Geoghagen N.S.M."/>
            <person name="Gnehm C.L."/>
            <person name="McDonald L.A."/>
            <person name="Small K.V."/>
            <person name="Fraser C.M."/>
            <person name="Smith H.O."/>
            <person name="Venter J.C."/>
        </authorList>
    </citation>
    <scope>NUCLEOTIDE SEQUENCE [LARGE SCALE GENOMIC DNA]</scope>
    <source>
        <strain>ATCC 51907 / DSM 11121 / KW20 / Rd</strain>
    </source>
</reference>
<keyword id="KW-1003">Cell membrane</keyword>
<keyword id="KW-0378">Hydrolase</keyword>
<keyword id="KW-0449">Lipoprotein</keyword>
<keyword id="KW-0472">Membrane</keyword>
<keyword id="KW-0564">Palmitate</keyword>
<keyword id="KW-0645">Protease</keyword>
<keyword id="KW-1185">Reference proteome</keyword>
<keyword id="KW-0732">Signal</keyword>
<keyword id="KW-0788">Thiol protease</keyword>
<feature type="signal peptide" evidence="1">
    <location>
        <begin position="1"/>
        <end position="18"/>
    </location>
</feature>
<feature type="chain" id="PRO_0000019769" description="Probable endopeptidase HI_1314">
    <location>
        <begin position="19"/>
        <end position="161"/>
    </location>
</feature>
<feature type="domain" description="NlpC/P60" evidence="2">
    <location>
        <begin position="39"/>
        <end position="161"/>
    </location>
</feature>
<feature type="active site" description="Nucleophile" evidence="2">
    <location>
        <position position="69"/>
    </location>
</feature>
<feature type="active site" description="Proton acceptor" evidence="2">
    <location>
        <position position="122"/>
    </location>
</feature>
<feature type="active site" evidence="2">
    <location>
        <position position="134"/>
    </location>
</feature>
<feature type="lipid moiety-binding region" description="N-palmitoyl cysteine" evidence="1">
    <location>
        <position position="19"/>
    </location>
</feature>
<feature type="lipid moiety-binding region" description="S-diacylglycerol cysteine" evidence="1">
    <location>
        <position position="19"/>
    </location>
</feature>
<proteinExistence type="inferred from homology"/>